<sequence>MSIDGLPPLRDVIERHGLQAKKALGQNFLLDLNLTGKIARSAGDLTNTAVIEVGPGPGGLTRALLSNGARRVVAIERDERCLAALAEVSAHYPGRLEVVSGDALKTDFAALASAAGGASGQVRIVANLPYNIGTELLVRWLTVVDWPPFYASMTLMFQREVAQRIVAEPGSDAYGRLGVLAGWRTKARIAFDVPPQAFTPPPKVTSSVVHLEPRATPLPADVKKLGRVTEAAFGQRRKMLRQSVKSLGGEALLERAGIDPTRRAETLSVEEFVRLTNSV</sequence>
<comment type="function">
    <text evidence="1">Specifically dimethylates two adjacent adenosines (A1518 and A1519) in the loop of a conserved hairpin near the 3'-end of 16S rRNA in the 30S particle. May play a critical role in biogenesis of 30S subunits.</text>
</comment>
<comment type="catalytic activity">
    <reaction evidence="1">
        <text>adenosine(1518)/adenosine(1519) in 16S rRNA + 4 S-adenosyl-L-methionine = N(6)-dimethyladenosine(1518)/N(6)-dimethyladenosine(1519) in 16S rRNA + 4 S-adenosyl-L-homocysteine + 4 H(+)</text>
        <dbReference type="Rhea" id="RHEA:19609"/>
        <dbReference type="Rhea" id="RHEA-COMP:10232"/>
        <dbReference type="Rhea" id="RHEA-COMP:10233"/>
        <dbReference type="ChEBI" id="CHEBI:15378"/>
        <dbReference type="ChEBI" id="CHEBI:57856"/>
        <dbReference type="ChEBI" id="CHEBI:59789"/>
        <dbReference type="ChEBI" id="CHEBI:74411"/>
        <dbReference type="ChEBI" id="CHEBI:74493"/>
        <dbReference type="EC" id="2.1.1.182"/>
    </reaction>
</comment>
<comment type="subcellular location">
    <subcellularLocation>
        <location evidence="1">Cytoplasm</location>
    </subcellularLocation>
</comment>
<comment type="similarity">
    <text evidence="1">Belongs to the class I-like SAM-binding methyltransferase superfamily. rRNA adenine N(6)-methyltransferase family. RsmA subfamily.</text>
</comment>
<evidence type="ECO:0000255" key="1">
    <source>
        <dbReference type="HAMAP-Rule" id="MF_00607"/>
    </source>
</evidence>
<reference key="1">
    <citation type="journal article" date="2000" name="DNA Res.">
        <title>Complete genome structure of the nitrogen-fixing symbiotic bacterium Mesorhizobium loti.</title>
        <authorList>
            <person name="Kaneko T."/>
            <person name="Nakamura Y."/>
            <person name="Sato S."/>
            <person name="Asamizu E."/>
            <person name="Kato T."/>
            <person name="Sasamoto S."/>
            <person name="Watanabe A."/>
            <person name="Idesawa K."/>
            <person name="Ishikawa A."/>
            <person name="Kawashima K."/>
            <person name="Kimura T."/>
            <person name="Kishida Y."/>
            <person name="Kiyokawa C."/>
            <person name="Kohara M."/>
            <person name="Matsumoto M."/>
            <person name="Matsuno A."/>
            <person name="Mochizuki Y."/>
            <person name="Nakayama S."/>
            <person name="Nakazaki N."/>
            <person name="Shimpo S."/>
            <person name="Sugimoto M."/>
            <person name="Takeuchi C."/>
            <person name="Yamada M."/>
            <person name="Tabata S."/>
        </authorList>
    </citation>
    <scope>NUCLEOTIDE SEQUENCE [LARGE SCALE GENOMIC DNA]</scope>
    <source>
        <strain>LMG 29417 / CECT 9101 / MAFF 303099</strain>
    </source>
</reference>
<protein>
    <recommendedName>
        <fullName evidence="1">Ribosomal RNA small subunit methyltransferase A</fullName>
        <ecNumber evidence="1">2.1.1.182</ecNumber>
    </recommendedName>
    <alternativeName>
        <fullName evidence="1">16S rRNA (adenine(1518)-N(6)/adenine(1519)-N(6))-dimethyltransferase</fullName>
    </alternativeName>
    <alternativeName>
        <fullName evidence="1">16S rRNA dimethyladenosine transferase</fullName>
    </alternativeName>
    <alternativeName>
        <fullName evidence="1">16S rRNA dimethylase</fullName>
    </alternativeName>
    <alternativeName>
        <fullName evidence="1">S-adenosylmethionine-6-N', N'-adenosyl(rRNA) dimethyltransferase</fullName>
    </alternativeName>
</protein>
<organism>
    <name type="scientific">Mesorhizobium japonicum (strain LMG 29417 / CECT 9101 / MAFF 303099)</name>
    <name type="common">Mesorhizobium loti (strain MAFF 303099)</name>
    <dbReference type="NCBI Taxonomy" id="266835"/>
    <lineage>
        <taxon>Bacteria</taxon>
        <taxon>Pseudomonadati</taxon>
        <taxon>Pseudomonadota</taxon>
        <taxon>Alphaproteobacteria</taxon>
        <taxon>Hyphomicrobiales</taxon>
        <taxon>Phyllobacteriaceae</taxon>
        <taxon>Mesorhizobium</taxon>
    </lineage>
</organism>
<dbReference type="EC" id="2.1.1.182" evidence="1"/>
<dbReference type="EMBL" id="BA000012">
    <property type="protein sequence ID" value="BAB54236.1"/>
    <property type="molecule type" value="Genomic_DNA"/>
</dbReference>
<dbReference type="RefSeq" id="WP_010915178.1">
    <property type="nucleotide sequence ID" value="NC_002678.2"/>
</dbReference>
<dbReference type="SMR" id="Q984S7"/>
<dbReference type="GeneID" id="66684940"/>
<dbReference type="KEGG" id="mlo:mll7860"/>
<dbReference type="eggNOG" id="COG0030">
    <property type="taxonomic scope" value="Bacteria"/>
</dbReference>
<dbReference type="HOGENOM" id="CLU_041220_0_1_5"/>
<dbReference type="Proteomes" id="UP000000552">
    <property type="component" value="Chromosome"/>
</dbReference>
<dbReference type="GO" id="GO:0005829">
    <property type="term" value="C:cytosol"/>
    <property type="evidence" value="ECO:0007669"/>
    <property type="project" value="TreeGrafter"/>
</dbReference>
<dbReference type="GO" id="GO:0052908">
    <property type="term" value="F:16S rRNA (adenine(1518)-N(6)/adenine(1519)-N(6))-dimethyltransferase activity"/>
    <property type="evidence" value="ECO:0007669"/>
    <property type="project" value="UniProtKB-EC"/>
</dbReference>
<dbReference type="GO" id="GO:0003723">
    <property type="term" value="F:RNA binding"/>
    <property type="evidence" value="ECO:0007669"/>
    <property type="project" value="UniProtKB-KW"/>
</dbReference>
<dbReference type="CDD" id="cd02440">
    <property type="entry name" value="AdoMet_MTases"/>
    <property type="match status" value="1"/>
</dbReference>
<dbReference type="FunFam" id="1.10.8.100:FF:000001">
    <property type="entry name" value="Ribosomal RNA small subunit methyltransferase A"/>
    <property type="match status" value="1"/>
</dbReference>
<dbReference type="Gene3D" id="1.10.8.100">
    <property type="entry name" value="Ribosomal RNA adenine dimethylase-like, domain 2"/>
    <property type="match status" value="1"/>
</dbReference>
<dbReference type="Gene3D" id="3.40.50.150">
    <property type="entry name" value="Vaccinia Virus protein VP39"/>
    <property type="match status" value="1"/>
</dbReference>
<dbReference type="HAMAP" id="MF_00607">
    <property type="entry name" value="16SrRNA_methyltr_A"/>
    <property type="match status" value="1"/>
</dbReference>
<dbReference type="InterPro" id="IPR001737">
    <property type="entry name" value="KsgA/Erm"/>
</dbReference>
<dbReference type="InterPro" id="IPR023165">
    <property type="entry name" value="rRNA_Ade_diMease-like_C"/>
</dbReference>
<dbReference type="InterPro" id="IPR020596">
    <property type="entry name" value="rRNA_Ade_Mease_Trfase_CS"/>
</dbReference>
<dbReference type="InterPro" id="IPR020598">
    <property type="entry name" value="rRNA_Ade_methylase_Trfase_N"/>
</dbReference>
<dbReference type="InterPro" id="IPR011530">
    <property type="entry name" value="rRNA_adenine_dimethylase"/>
</dbReference>
<dbReference type="InterPro" id="IPR029063">
    <property type="entry name" value="SAM-dependent_MTases_sf"/>
</dbReference>
<dbReference type="NCBIfam" id="TIGR00755">
    <property type="entry name" value="ksgA"/>
    <property type="match status" value="1"/>
</dbReference>
<dbReference type="PANTHER" id="PTHR11727">
    <property type="entry name" value="DIMETHYLADENOSINE TRANSFERASE"/>
    <property type="match status" value="1"/>
</dbReference>
<dbReference type="PANTHER" id="PTHR11727:SF7">
    <property type="entry name" value="DIMETHYLADENOSINE TRANSFERASE-RELATED"/>
    <property type="match status" value="1"/>
</dbReference>
<dbReference type="Pfam" id="PF00398">
    <property type="entry name" value="RrnaAD"/>
    <property type="match status" value="1"/>
</dbReference>
<dbReference type="SMART" id="SM00650">
    <property type="entry name" value="rADc"/>
    <property type="match status" value="1"/>
</dbReference>
<dbReference type="SUPFAM" id="SSF53335">
    <property type="entry name" value="S-adenosyl-L-methionine-dependent methyltransferases"/>
    <property type="match status" value="1"/>
</dbReference>
<dbReference type="PROSITE" id="PS01131">
    <property type="entry name" value="RRNA_A_DIMETH"/>
    <property type="match status" value="1"/>
</dbReference>
<dbReference type="PROSITE" id="PS51689">
    <property type="entry name" value="SAM_RNA_A_N6_MT"/>
    <property type="match status" value="1"/>
</dbReference>
<keyword id="KW-0963">Cytoplasm</keyword>
<keyword id="KW-0489">Methyltransferase</keyword>
<keyword id="KW-0694">RNA-binding</keyword>
<keyword id="KW-0698">rRNA processing</keyword>
<keyword id="KW-0949">S-adenosyl-L-methionine</keyword>
<keyword id="KW-0808">Transferase</keyword>
<gene>
    <name evidence="1" type="primary">rsmA</name>
    <name evidence="1" type="synonym">ksgA</name>
    <name type="ordered locus">mll7860</name>
</gene>
<proteinExistence type="inferred from homology"/>
<feature type="chain" id="PRO_0000101590" description="Ribosomal RNA small subunit methyltransferase A">
    <location>
        <begin position="1"/>
        <end position="279"/>
    </location>
</feature>
<feature type="binding site" evidence="1">
    <location>
        <position position="27"/>
    </location>
    <ligand>
        <name>S-adenosyl-L-methionine</name>
        <dbReference type="ChEBI" id="CHEBI:59789"/>
    </ligand>
</feature>
<feature type="binding site" evidence="1">
    <location>
        <position position="29"/>
    </location>
    <ligand>
        <name>S-adenosyl-L-methionine</name>
        <dbReference type="ChEBI" id="CHEBI:59789"/>
    </ligand>
</feature>
<feature type="binding site" evidence="1">
    <location>
        <position position="54"/>
    </location>
    <ligand>
        <name>S-adenosyl-L-methionine</name>
        <dbReference type="ChEBI" id="CHEBI:59789"/>
    </ligand>
</feature>
<feature type="binding site" evidence="1">
    <location>
        <position position="76"/>
    </location>
    <ligand>
        <name>S-adenosyl-L-methionine</name>
        <dbReference type="ChEBI" id="CHEBI:59789"/>
    </ligand>
</feature>
<feature type="binding site" evidence="1">
    <location>
        <position position="102"/>
    </location>
    <ligand>
        <name>S-adenosyl-L-methionine</name>
        <dbReference type="ChEBI" id="CHEBI:59789"/>
    </ligand>
</feature>
<feature type="binding site" evidence="1">
    <location>
        <position position="127"/>
    </location>
    <ligand>
        <name>S-adenosyl-L-methionine</name>
        <dbReference type="ChEBI" id="CHEBI:59789"/>
    </ligand>
</feature>
<name>RSMA_RHILO</name>
<accession>Q984S7</accession>